<dbReference type="EMBL" id="AF286377">
    <property type="protein sequence ID" value="AAG10298.1"/>
    <property type="molecule type" value="mRNA"/>
</dbReference>
<dbReference type="EMBL" id="BX284601">
    <property type="protein sequence ID" value="CAB00031.2"/>
    <property type="molecule type" value="Genomic_DNA"/>
</dbReference>
<dbReference type="PIR" id="S05707">
    <property type="entry name" value="S05707"/>
</dbReference>
<dbReference type="PIR" id="T23218">
    <property type="entry name" value="T23218"/>
</dbReference>
<dbReference type="RefSeq" id="NP_492304.1">
    <property type="nucleotide sequence ID" value="NM_059903.6"/>
</dbReference>
<dbReference type="SMR" id="P20268"/>
<dbReference type="BioGRID" id="38073">
    <property type="interactions" value="7"/>
</dbReference>
<dbReference type="DIP" id="DIP-61430N"/>
<dbReference type="FunCoup" id="P20268">
    <property type="interactions" value="411"/>
</dbReference>
<dbReference type="IntAct" id="P20268">
    <property type="interactions" value="5"/>
</dbReference>
<dbReference type="STRING" id="6239.K02B12.1.1"/>
<dbReference type="PaxDb" id="6239-K02B12.1"/>
<dbReference type="EnsemblMetazoa" id="K02B12.1.1">
    <property type="protein sequence ID" value="K02B12.1.1"/>
    <property type="gene ID" value="WBGene00000431"/>
</dbReference>
<dbReference type="GeneID" id="172640"/>
<dbReference type="KEGG" id="cel:CELE_K02B12.1"/>
<dbReference type="UCSC" id="K02B12.1">
    <property type="organism name" value="c. elegans"/>
</dbReference>
<dbReference type="AGR" id="WB:WBGene00000431"/>
<dbReference type="CTD" id="172640"/>
<dbReference type="WormBase" id="K02B12.1">
    <property type="protein sequence ID" value="CE28045"/>
    <property type="gene ID" value="WBGene00000431"/>
    <property type="gene designation" value="ceh-6"/>
</dbReference>
<dbReference type="eggNOG" id="KOG3802">
    <property type="taxonomic scope" value="Eukaryota"/>
</dbReference>
<dbReference type="HOGENOM" id="CLU_013065_1_1_1"/>
<dbReference type="InParanoid" id="P20268"/>
<dbReference type="OMA" id="SERWPPP"/>
<dbReference type="OrthoDB" id="6358449at2759"/>
<dbReference type="PhylomeDB" id="P20268"/>
<dbReference type="Reactome" id="R-CEL-373752">
    <property type="pathway name" value="Netrin-1 signaling"/>
</dbReference>
<dbReference type="Reactome" id="R-CEL-418885">
    <property type="pathway name" value="DCC mediated attractive signaling"/>
</dbReference>
<dbReference type="Reactome" id="R-CEL-418886">
    <property type="pathway name" value="Netrin mediated repulsion signals"/>
</dbReference>
<dbReference type="PRO" id="PR:P20268"/>
<dbReference type="Proteomes" id="UP000001940">
    <property type="component" value="Chromosome I"/>
</dbReference>
<dbReference type="Bgee" id="WBGene00000431">
    <property type="expression patterns" value="Expressed in pharyngeal muscle cell (C elegans) and 3 other cell types or tissues"/>
</dbReference>
<dbReference type="GO" id="GO:0005737">
    <property type="term" value="C:cytoplasm"/>
    <property type="evidence" value="ECO:0000314"/>
    <property type="project" value="WormBase"/>
</dbReference>
<dbReference type="GO" id="GO:0005829">
    <property type="term" value="C:cytosol"/>
    <property type="evidence" value="ECO:0000314"/>
    <property type="project" value="WormBase"/>
</dbReference>
<dbReference type="GO" id="GO:0005634">
    <property type="term" value="C:nucleus"/>
    <property type="evidence" value="ECO:0000314"/>
    <property type="project" value="WormBase"/>
</dbReference>
<dbReference type="GO" id="GO:0003700">
    <property type="term" value="F:DNA-binding transcription factor activity"/>
    <property type="evidence" value="ECO:0000250"/>
    <property type="project" value="WormBase"/>
</dbReference>
<dbReference type="GO" id="GO:0000981">
    <property type="term" value="F:DNA-binding transcription factor activity, RNA polymerase II-specific"/>
    <property type="evidence" value="ECO:0000318"/>
    <property type="project" value="GO_Central"/>
</dbReference>
<dbReference type="GO" id="GO:0000978">
    <property type="term" value="F:RNA polymerase II cis-regulatory region sequence-specific DNA binding"/>
    <property type="evidence" value="ECO:0000318"/>
    <property type="project" value="GO_Central"/>
</dbReference>
<dbReference type="GO" id="GO:0030154">
    <property type="term" value="P:cell differentiation"/>
    <property type="evidence" value="ECO:0000315"/>
    <property type="project" value="WormBase"/>
</dbReference>
<dbReference type="GO" id="GO:0050891">
    <property type="term" value="P:multicellular organismal-level water homeostasis"/>
    <property type="evidence" value="ECO:0000315"/>
    <property type="project" value="WormBase"/>
</dbReference>
<dbReference type="GO" id="GO:0006355">
    <property type="term" value="P:regulation of DNA-templated transcription"/>
    <property type="evidence" value="ECO:0000304"/>
    <property type="project" value="WormBase"/>
</dbReference>
<dbReference type="GO" id="GO:0006357">
    <property type="term" value="P:regulation of transcription by RNA polymerase II"/>
    <property type="evidence" value="ECO:0000318"/>
    <property type="project" value="GO_Central"/>
</dbReference>
<dbReference type="GO" id="GO:0060290">
    <property type="term" value="P:transdifferentiation"/>
    <property type="evidence" value="ECO:0000315"/>
    <property type="project" value="WormBase"/>
</dbReference>
<dbReference type="CDD" id="cd00086">
    <property type="entry name" value="homeodomain"/>
    <property type="match status" value="1"/>
</dbReference>
<dbReference type="FunFam" id="1.10.260.40:FF:000001">
    <property type="entry name" value="POU domain protein"/>
    <property type="match status" value="1"/>
</dbReference>
<dbReference type="Gene3D" id="1.10.10.60">
    <property type="entry name" value="Homeodomain-like"/>
    <property type="match status" value="1"/>
</dbReference>
<dbReference type="Gene3D" id="1.10.260.40">
    <property type="entry name" value="lambda repressor-like DNA-binding domains"/>
    <property type="match status" value="1"/>
</dbReference>
<dbReference type="InterPro" id="IPR001356">
    <property type="entry name" value="HD"/>
</dbReference>
<dbReference type="InterPro" id="IPR017970">
    <property type="entry name" value="Homeobox_CS"/>
</dbReference>
<dbReference type="InterPro" id="IPR009057">
    <property type="entry name" value="Homeodomain-like_sf"/>
</dbReference>
<dbReference type="InterPro" id="IPR010982">
    <property type="entry name" value="Lambda_DNA-bd_dom_sf"/>
</dbReference>
<dbReference type="InterPro" id="IPR013847">
    <property type="entry name" value="POU"/>
</dbReference>
<dbReference type="InterPro" id="IPR000327">
    <property type="entry name" value="POU_dom"/>
</dbReference>
<dbReference type="InterPro" id="IPR050255">
    <property type="entry name" value="POU_domain_TF"/>
</dbReference>
<dbReference type="PANTHER" id="PTHR11636">
    <property type="entry name" value="POU DOMAIN"/>
    <property type="match status" value="1"/>
</dbReference>
<dbReference type="PANTHER" id="PTHR11636:SF89">
    <property type="entry name" value="POU DOMAIN PROTEIN 2, ISOFORM B-RELATED"/>
    <property type="match status" value="1"/>
</dbReference>
<dbReference type="Pfam" id="PF00046">
    <property type="entry name" value="Homeodomain"/>
    <property type="match status" value="1"/>
</dbReference>
<dbReference type="Pfam" id="PF00157">
    <property type="entry name" value="Pou"/>
    <property type="match status" value="1"/>
</dbReference>
<dbReference type="PRINTS" id="PR00028">
    <property type="entry name" value="POUDOMAIN"/>
</dbReference>
<dbReference type="SMART" id="SM00389">
    <property type="entry name" value="HOX"/>
    <property type="match status" value="1"/>
</dbReference>
<dbReference type="SMART" id="SM00352">
    <property type="entry name" value="POU"/>
    <property type="match status" value="1"/>
</dbReference>
<dbReference type="SUPFAM" id="SSF46689">
    <property type="entry name" value="Homeodomain-like"/>
    <property type="match status" value="1"/>
</dbReference>
<dbReference type="SUPFAM" id="SSF47413">
    <property type="entry name" value="lambda repressor-like DNA-binding domains"/>
    <property type="match status" value="1"/>
</dbReference>
<dbReference type="PROSITE" id="PS00027">
    <property type="entry name" value="HOMEOBOX_1"/>
    <property type="match status" value="1"/>
</dbReference>
<dbReference type="PROSITE" id="PS50071">
    <property type="entry name" value="HOMEOBOX_2"/>
    <property type="match status" value="1"/>
</dbReference>
<dbReference type="PROSITE" id="PS00035">
    <property type="entry name" value="POU_1"/>
    <property type="match status" value="1"/>
</dbReference>
<dbReference type="PROSITE" id="PS00465">
    <property type="entry name" value="POU_2"/>
    <property type="match status" value="1"/>
</dbReference>
<dbReference type="PROSITE" id="PS51179">
    <property type="entry name" value="POU_3"/>
    <property type="match status" value="1"/>
</dbReference>
<evidence type="ECO:0000255" key="1">
    <source>
        <dbReference type="PROSITE-ProRule" id="PRU00108"/>
    </source>
</evidence>
<evidence type="ECO:0000255" key="2">
    <source>
        <dbReference type="PROSITE-ProRule" id="PRU00530"/>
    </source>
</evidence>
<evidence type="ECO:0000256" key="3">
    <source>
        <dbReference type="SAM" id="MobiDB-lite"/>
    </source>
</evidence>
<evidence type="ECO:0000269" key="4">
    <source>
    </source>
</evidence>
<evidence type="ECO:0000269" key="5">
    <source>
    </source>
</evidence>
<evidence type="ECO:0000269" key="6">
    <source>
    </source>
</evidence>
<evidence type="ECO:0000305" key="7"/>
<evidence type="ECO:0000312" key="8">
    <source>
        <dbReference type="WormBase" id="K02B12.1"/>
    </source>
</evidence>
<organism>
    <name type="scientific">Caenorhabditis elegans</name>
    <dbReference type="NCBI Taxonomy" id="6239"/>
    <lineage>
        <taxon>Eukaryota</taxon>
        <taxon>Metazoa</taxon>
        <taxon>Ecdysozoa</taxon>
        <taxon>Nematoda</taxon>
        <taxon>Chromadorea</taxon>
        <taxon>Rhabditida</taxon>
        <taxon>Rhabditina</taxon>
        <taxon>Rhabditomorpha</taxon>
        <taxon>Rhabditoidea</taxon>
        <taxon>Rhabditidae</taxon>
        <taxon>Peloderinae</taxon>
        <taxon>Caenorhabditis</taxon>
    </lineage>
</organism>
<name>HM06_CAEEL</name>
<accession>P20268</accession>
<accession>Q9GSZ8</accession>
<keyword id="KW-0217">Developmental protein</keyword>
<keyword id="KW-0221">Differentiation</keyword>
<keyword id="KW-0238">DNA-binding</keyword>
<keyword id="KW-0371">Homeobox</keyword>
<keyword id="KW-0539">Nucleus</keyword>
<keyword id="KW-1185">Reference proteome</keyword>
<protein>
    <recommendedName>
        <fullName>Homeobox protein ceh-6</fullName>
    </recommendedName>
</protein>
<feature type="chain" id="PRO_0000100781" description="Homeobox protein ceh-6">
    <location>
        <begin position="1"/>
        <end position="380"/>
    </location>
</feature>
<feature type="domain" description="POU-specific" evidence="2">
    <location>
        <begin position="187"/>
        <end position="261"/>
    </location>
</feature>
<feature type="DNA-binding region" description="Homeobox" evidence="1">
    <location>
        <begin position="281"/>
        <end position="340"/>
    </location>
</feature>
<feature type="region of interest" description="Disordered" evidence="3">
    <location>
        <begin position="1"/>
        <end position="31"/>
    </location>
</feature>
<feature type="region of interest" description="Disordered" evidence="3">
    <location>
        <begin position="167"/>
        <end position="190"/>
    </location>
</feature>
<feature type="region of interest" description="Disordered" evidence="3">
    <location>
        <begin position="265"/>
        <end position="286"/>
    </location>
</feature>
<feature type="compositionally biased region" description="Low complexity" evidence="3">
    <location>
        <begin position="1"/>
        <end position="25"/>
    </location>
</feature>
<comment type="function">
    <text evidence="4 5">Vital for embryonic development and essential for the proper function of the excretory cell (PubMed:11171402). Required for the transdifferentiation of the Y rectal epithelial cell to the PDA motor neuron during larval development (PubMed:22493276).</text>
</comment>
<comment type="subunit">
    <text evidence="5 6">Interacts with egl-27, sox-2 and sem-4 (PubMed:22493276). Interacts with wdr-5.1 (PubMed:25124442).</text>
</comment>
<comment type="subcellular location">
    <subcellularLocation>
        <location evidence="7">Nucleus</location>
    </subcellularLocation>
</comment>
<comment type="tissue specificity">
    <text>Expressed in a series of neurons in the ring ganglia, excretory cell, dividing neuroblasts in the ventral cord and rectal cells.</text>
</comment>
<comment type="disruption phenotype">
    <text evidence="5">RNAi-mediated knockdown results in defective PDA motor neuron differentiation as a result of failed Y rectal cell migration from the rectum.</text>
</comment>
<comment type="similarity">
    <text evidence="7">Belongs to the POU transcription factor family. Class-3 subfamily.</text>
</comment>
<gene>
    <name evidence="8" type="primary">ceh-6</name>
    <name evidence="8" type="ORF">K02B12.1</name>
</gene>
<sequence length="380" mass="42575">MLIPSSSSIPSSLSASASDSEPSSLNGSGISDQNILPNYHLHHHLINENEMEAANYAQVIKPTCEAFQDWPHTPMLYQQPQLHFMLPQHDWAYPHLAQSLPPPHHLTPSTAAVAAATIASQSSIINQTSVVTSTPSCQIKQEVERPEIIQRLMPPWPPAYQFSCDDSGSVSGAGGPHQPLSDISDDSEQTCPDDLEGFAKQFKQRRIKLGYTQADVGVALGTLYGNIFSQTTICRFEALQLSFKNMCKLKPLLFKWLEEADSTTGSPNSTFEKMTGQAGRKRKKRTSIEVNVKSRLEFHFQSNQKPNAQEITQVAMELQLEKEVVRVWFCNRRQKEKRIAPNQYDAPHPMALNNGYPMTADLFPYQAVVNHYTQQSPRQQ</sequence>
<proteinExistence type="evidence at protein level"/>
<reference key="1">
    <citation type="journal article" date="2001" name="Development">
        <title>Regulation of ectodermal and excretory function by the C. elegans POU homeobox gene ceh-6.</title>
        <authorList>
            <person name="Buerglin T.R."/>
            <person name="Ruvkun G."/>
        </authorList>
    </citation>
    <scope>NUCLEOTIDE SEQUENCE [MRNA]</scope>
    <scope>FUNCTION</scope>
    <source>
        <strain>Bristol N2</strain>
        <tissue>Embryo</tissue>
    </source>
</reference>
<reference key="2">
    <citation type="journal article" date="1998" name="Science">
        <title>Genome sequence of the nematode C. elegans: a platform for investigating biology.</title>
        <authorList>
            <consortium name="The C. elegans sequencing consortium"/>
        </authorList>
    </citation>
    <scope>NUCLEOTIDE SEQUENCE [LARGE SCALE GENOMIC DNA]</scope>
    <source>
        <strain>Bristol N2</strain>
    </source>
</reference>
<reference key="3">
    <citation type="journal article" date="1989" name="Nature">
        <title>Caenorhabditis elegans has scores of homoeobox-containing genes.</title>
        <authorList>
            <person name="Buerglin T.R."/>
            <person name="Finney M."/>
            <person name="Coulson A."/>
            <person name="Ruvkun G."/>
        </authorList>
    </citation>
    <scope>NUCLEOTIDE SEQUENCE [MRNA] OF 182-340</scope>
    <source>
        <strain>Bristol N2</strain>
    </source>
</reference>
<reference key="4">
    <citation type="journal article" date="2012" name="Proc. Natl. Acad. Sci. U.S.A.">
        <title>Members of the NODE (Nanog and Oct4-associated deacetylase) complex and SOX-2 promote the initiation of a natural cellular reprogramming event in vivo.</title>
        <authorList>
            <person name="Kagias K."/>
            <person name="Ahier A."/>
            <person name="Fischer N."/>
            <person name="Jarriault S."/>
        </authorList>
    </citation>
    <scope>FUNCTION</scope>
    <scope>INTERACTION WITH EGL-27; SOX-2 AND SEM-4</scope>
    <scope>DISRUPTION PHENOTYPE</scope>
</reference>
<reference key="5">
    <citation type="journal article" date="2014" name="Science">
        <title>Sequential histone-modifying activities determine the robustness of transdifferentiation.</title>
        <authorList>
            <person name="Zuryn S."/>
            <person name="Ahier A."/>
            <person name="Portoso M."/>
            <person name="White E.R."/>
            <person name="Morin M.C."/>
            <person name="Margueron R."/>
            <person name="Jarriault S."/>
        </authorList>
    </citation>
    <scope>INTERACTION WITH WDR-5.1</scope>
</reference>